<reference key="1">
    <citation type="journal article" date="2003" name="Biochem. J.">
        <title>The Dictyostelium class I myosin, MyoD, contains a novel light chain that lacks high-affinity calcium-binding sites.</title>
        <authorList>
            <person name="De La Roche M.A."/>
            <person name="Lee S.F."/>
            <person name="Cote G.P."/>
        </authorList>
    </citation>
    <scope>NUCLEOTIDE SEQUENCE [GENOMIC DNA]</scope>
    <scope>PROTEIN SEQUENCE OF 40-54 AND 126-140</scope>
    <scope>FUNCTION</scope>
    <scope>SUBUNIT</scope>
    <scope>SUBCELLULAR LOCATION</scope>
</reference>
<reference key="2">
    <citation type="journal article" date="2006" name="J. Biol. Chem.">
        <title>Identification and characterization of an 8-kDa light chain associated with Dictyostelium discoideum MyoB, a class I myosin.</title>
        <authorList>
            <person name="Crawley S.W."/>
            <person name="de la Roche M.A."/>
            <person name="Lee S.F."/>
            <person name="Li Z."/>
            <person name="Chitayat S."/>
            <person name="Smith S.P."/>
            <person name="Cote G.P."/>
        </authorList>
    </citation>
    <scope>NUCLEOTIDE SEQUENCE [GENOMIC DNA]</scope>
    <scope>FUNCTION</scope>
    <scope>SUBUNIT</scope>
</reference>
<reference key="3">
    <citation type="journal article" date="2005" name="Nature">
        <title>The genome of the social amoeba Dictyostelium discoideum.</title>
        <authorList>
            <person name="Eichinger L."/>
            <person name="Pachebat J.A."/>
            <person name="Gloeckner G."/>
            <person name="Rajandream M.A."/>
            <person name="Sucgang R."/>
            <person name="Berriman M."/>
            <person name="Song J."/>
            <person name="Olsen R."/>
            <person name="Szafranski K."/>
            <person name="Xu Q."/>
            <person name="Tunggal B."/>
            <person name="Kummerfeld S."/>
            <person name="Madera M."/>
            <person name="Konfortov B.A."/>
            <person name="Rivero F."/>
            <person name="Bankier A.T."/>
            <person name="Lehmann R."/>
            <person name="Hamlin N."/>
            <person name="Davies R."/>
            <person name="Gaudet P."/>
            <person name="Fey P."/>
            <person name="Pilcher K."/>
            <person name="Chen G."/>
            <person name="Saunders D."/>
            <person name="Sodergren E.J."/>
            <person name="Davis P."/>
            <person name="Kerhornou A."/>
            <person name="Nie X."/>
            <person name="Hall N."/>
            <person name="Anjard C."/>
            <person name="Hemphill L."/>
            <person name="Bason N."/>
            <person name="Farbrother P."/>
            <person name="Desany B."/>
            <person name="Just E."/>
            <person name="Morio T."/>
            <person name="Rost R."/>
            <person name="Churcher C.M."/>
            <person name="Cooper J."/>
            <person name="Haydock S."/>
            <person name="van Driessche N."/>
            <person name="Cronin A."/>
            <person name="Goodhead I."/>
            <person name="Muzny D.M."/>
            <person name="Mourier T."/>
            <person name="Pain A."/>
            <person name="Lu M."/>
            <person name="Harper D."/>
            <person name="Lindsay R."/>
            <person name="Hauser H."/>
            <person name="James K.D."/>
            <person name="Quiles M."/>
            <person name="Madan Babu M."/>
            <person name="Saito T."/>
            <person name="Buchrieser C."/>
            <person name="Wardroper A."/>
            <person name="Felder M."/>
            <person name="Thangavelu M."/>
            <person name="Johnson D."/>
            <person name="Knights A."/>
            <person name="Loulseged H."/>
            <person name="Mungall K.L."/>
            <person name="Oliver K."/>
            <person name="Price C."/>
            <person name="Quail M.A."/>
            <person name="Urushihara H."/>
            <person name="Hernandez J."/>
            <person name="Rabbinowitsch E."/>
            <person name="Steffen D."/>
            <person name="Sanders M."/>
            <person name="Ma J."/>
            <person name="Kohara Y."/>
            <person name="Sharp S."/>
            <person name="Simmonds M.N."/>
            <person name="Spiegler S."/>
            <person name="Tivey A."/>
            <person name="Sugano S."/>
            <person name="White B."/>
            <person name="Walker D."/>
            <person name="Woodward J.R."/>
            <person name="Winckler T."/>
            <person name="Tanaka Y."/>
            <person name="Shaulsky G."/>
            <person name="Schleicher M."/>
            <person name="Weinstock G.M."/>
            <person name="Rosenthal A."/>
            <person name="Cox E.C."/>
            <person name="Chisholm R.L."/>
            <person name="Gibbs R.A."/>
            <person name="Loomis W.F."/>
            <person name="Platzer M."/>
            <person name="Kay R.R."/>
            <person name="Williams J.G."/>
            <person name="Dear P.H."/>
            <person name="Noegel A.A."/>
            <person name="Barrell B.G."/>
            <person name="Kuspa A."/>
        </authorList>
    </citation>
    <scope>NUCLEOTIDE SEQUENCE [LARGE SCALE GENOMIC DNA]</scope>
    <source>
        <strain>AX4</strain>
    </source>
</reference>
<gene>
    <name type="primary">mlcD</name>
    <name type="ORF">DDB_G0277917</name>
</gene>
<sequence>MASKLNEEAQSEFKEGFALYDGNKDGKLEAAELANTLRWLGQNPSQSEINEILREFGSNNQMGVDGLFNYLGRKVVDDFDEKEIIEAFQVFDKDGKGMIGASDLRHILTNLGERLPEEQVEEMLRQAVGSGDGAINYEPFVRNMLKK</sequence>
<organism>
    <name type="scientific">Dictyostelium discoideum</name>
    <name type="common">Social amoeba</name>
    <dbReference type="NCBI Taxonomy" id="44689"/>
    <lineage>
        <taxon>Eukaryota</taxon>
        <taxon>Amoebozoa</taxon>
        <taxon>Evosea</taxon>
        <taxon>Eumycetozoa</taxon>
        <taxon>Dictyostelia</taxon>
        <taxon>Dictyosteliales</taxon>
        <taxon>Dictyosteliaceae</taxon>
        <taxon>Dictyostelium</taxon>
    </lineage>
</organism>
<keyword id="KW-0106">Calcium</keyword>
<keyword id="KW-0963">Cytoplasm</keyword>
<keyword id="KW-0903">Direct protein sequencing</keyword>
<keyword id="KW-0479">Metal-binding</keyword>
<keyword id="KW-0505">Motor protein</keyword>
<keyword id="KW-0518">Myosin</keyword>
<keyword id="KW-1185">Reference proteome</keyword>
<keyword id="KW-0677">Repeat</keyword>
<feature type="chain" id="PRO_0000391642" description="Myosin-ID light chain">
    <location>
        <begin position="1"/>
        <end position="147"/>
    </location>
</feature>
<feature type="domain" description="EF-hand 1" evidence="2">
    <location>
        <begin position="8"/>
        <end position="43"/>
    </location>
</feature>
<feature type="domain" description="EF-hand 2" evidence="2">
    <location>
        <begin position="79"/>
        <end position="114"/>
    </location>
</feature>
<feature type="domain" description="EF-hand 3" evidence="2">
    <location>
        <begin position="115"/>
        <end position="147"/>
    </location>
</feature>
<feature type="binding site" evidence="2">
    <location>
        <position position="21"/>
    </location>
    <ligand>
        <name>Ca(2+)</name>
        <dbReference type="ChEBI" id="CHEBI:29108"/>
    </ligand>
</feature>
<feature type="binding site" evidence="2">
    <location>
        <position position="23"/>
    </location>
    <ligand>
        <name>Ca(2+)</name>
        <dbReference type="ChEBI" id="CHEBI:29108"/>
    </ligand>
</feature>
<feature type="binding site" evidence="2">
    <location>
        <position position="25"/>
    </location>
    <ligand>
        <name>Ca(2+)</name>
        <dbReference type="ChEBI" id="CHEBI:29108"/>
    </ligand>
</feature>
<feature type="binding site" evidence="2">
    <location>
        <position position="27"/>
    </location>
    <ligand>
        <name>Ca(2+)</name>
        <dbReference type="ChEBI" id="CHEBI:29108"/>
    </ligand>
</feature>
<feature type="binding site" evidence="2">
    <location>
        <position position="32"/>
    </location>
    <ligand>
        <name>Ca(2+)</name>
        <dbReference type="ChEBI" id="CHEBI:29108"/>
    </ligand>
</feature>
<name>MLCD_DICDI</name>
<comment type="function">
    <text evidence="3 4">Functions as the light chain for myosin-D. Has low affinity for calcium.</text>
</comment>
<comment type="subunit">
    <text evidence="1 3 4">Myosin I is a dimer of a heavy and a light chain. Inability to self-assemble into filaments (By similarity). Interacts with myoD. Does not interact with myoB or myoC.</text>
</comment>
<comment type="subcellular location">
    <subcellularLocation>
        <location evidence="3">Cytoplasm</location>
    </subcellularLocation>
</comment>
<proteinExistence type="evidence at protein level"/>
<accession>Q7Z2B8</accession>
<accession>Q54YE4</accession>
<dbReference type="EMBL" id="AY280458">
    <property type="protein sequence ID" value="AAP34384.1"/>
    <property type="molecule type" value="Genomic_DNA"/>
</dbReference>
<dbReference type="EMBL" id="AAFI02000023">
    <property type="protein sequence ID" value="EAL68131.1"/>
    <property type="molecule type" value="Genomic_DNA"/>
</dbReference>
<dbReference type="RefSeq" id="XP_642258.1">
    <property type="nucleotide sequence ID" value="XM_637166.1"/>
</dbReference>
<dbReference type="SMR" id="Q7Z2B8"/>
<dbReference type="STRING" id="44689.Q7Z2B8"/>
<dbReference type="PaxDb" id="44689-DDB0214812"/>
<dbReference type="EnsemblProtists" id="EAL68131">
    <property type="protein sequence ID" value="EAL68131"/>
    <property type="gene ID" value="DDB_G0277917"/>
</dbReference>
<dbReference type="GeneID" id="8621467"/>
<dbReference type="KEGG" id="ddi:DDB_G0277917"/>
<dbReference type="dictyBase" id="DDB_G0277917">
    <property type="gene designation" value="mlcD"/>
</dbReference>
<dbReference type="VEuPathDB" id="AmoebaDB:DDB_G0277917"/>
<dbReference type="eggNOG" id="KOG0027">
    <property type="taxonomic scope" value="Eukaryota"/>
</dbReference>
<dbReference type="HOGENOM" id="CLU_061288_2_0_1"/>
<dbReference type="InParanoid" id="Q7Z2B8"/>
<dbReference type="OMA" id="VLRWLGQ"/>
<dbReference type="PhylomeDB" id="Q7Z2B8"/>
<dbReference type="Reactome" id="R-DDI-111932">
    <property type="pathway name" value="CaMK IV-mediated phosphorylation of CREB"/>
</dbReference>
<dbReference type="Reactome" id="R-DDI-111957">
    <property type="pathway name" value="Cam-PDE 1 activation"/>
</dbReference>
<dbReference type="Reactome" id="R-DDI-114608">
    <property type="pathway name" value="Platelet degranulation"/>
</dbReference>
<dbReference type="Reactome" id="R-DDI-1474151">
    <property type="pathway name" value="Tetrahydrobiopterin (BH4) synthesis, recycling, salvage and regulation"/>
</dbReference>
<dbReference type="Reactome" id="R-DDI-163615">
    <property type="pathway name" value="PKA activation"/>
</dbReference>
<dbReference type="Reactome" id="R-DDI-1855204">
    <property type="pathway name" value="Synthesis of IP3 and IP4 in the cytosol"/>
</dbReference>
<dbReference type="Reactome" id="R-DDI-203615">
    <property type="pathway name" value="eNOS activation"/>
</dbReference>
<dbReference type="Reactome" id="R-DDI-2871809">
    <property type="pathway name" value="FCERI mediated Ca+2 mobilization"/>
</dbReference>
<dbReference type="Reactome" id="R-DDI-4086398">
    <property type="pathway name" value="Ca2+ pathway"/>
</dbReference>
<dbReference type="Reactome" id="R-DDI-442729">
    <property type="pathway name" value="CREB1 phosphorylation through the activation of CaMKII/CaMKK/CaMKIV cascasde"/>
</dbReference>
<dbReference type="Reactome" id="R-DDI-5218920">
    <property type="pathway name" value="VEGFR2 mediated vascular permeability"/>
</dbReference>
<dbReference type="Reactome" id="R-DDI-5607763">
    <property type="pathway name" value="CLEC7A (Dectin-1) induces NFAT activation"/>
</dbReference>
<dbReference type="Reactome" id="R-DDI-5626467">
    <property type="pathway name" value="RHO GTPases activate IQGAPs"/>
</dbReference>
<dbReference type="Reactome" id="R-DDI-6798695">
    <property type="pathway name" value="Neutrophil degranulation"/>
</dbReference>
<dbReference type="Reactome" id="R-DDI-9009391">
    <property type="pathway name" value="Extra-nuclear estrogen signaling"/>
</dbReference>
<dbReference type="Reactome" id="R-DDI-9619229">
    <property type="pathway name" value="Activation of RAC1 downstream of NMDARs"/>
</dbReference>
<dbReference type="PRO" id="PR:Q7Z2B8"/>
<dbReference type="Proteomes" id="UP000002195">
    <property type="component" value="Chromosome 3"/>
</dbReference>
<dbReference type="GO" id="GO:0062201">
    <property type="term" value="C:actin wave"/>
    <property type="evidence" value="ECO:0000314"/>
    <property type="project" value="dictyBase"/>
</dbReference>
<dbReference type="GO" id="GO:0005737">
    <property type="term" value="C:cytoplasm"/>
    <property type="evidence" value="ECO:0000318"/>
    <property type="project" value="GO_Central"/>
</dbReference>
<dbReference type="GO" id="GO:0070687">
    <property type="term" value="C:macropinocytic cup cytoskeleton"/>
    <property type="evidence" value="ECO:0000314"/>
    <property type="project" value="dictyBase"/>
</dbReference>
<dbReference type="GO" id="GO:0016459">
    <property type="term" value="C:myosin complex"/>
    <property type="evidence" value="ECO:0000314"/>
    <property type="project" value="dictyBase"/>
</dbReference>
<dbReference type="GO" id="GO:0005509">
    <property type="term" value="F:calcium ion binding"/>
    <property type="evidence" value="ECO:0000314"/>
    <property type="project" value="dictyBase"/>
</dbReference>
<dbReference type="GO" id="GO:0030234">
    <property type="term" value="F:enzyme regulator activity"/>
    <property type="evidence" value="ECO:0000318"/>
    <property type="project" value="GO_Central"/>
</dbReference>
<dbReference type="GO" id="GO:0032036">
    <property type="term" value="F:myosin heavy chain binding"/>
    <property type="evidence" value="ECO:0000353"/>
    <property type="project" value="dictyBase"/>
</dbReference>
<dbReference type="GO" id="GO:0000226">
    <property type="term" value="P:microtubule cytoskeleton organization"/>
    <property type="evidence" value="ECO:0000318"/>
    <property type="project" value="GO_Central"/>
</dbReference>
<dbReference type="CDD" id="cd00051">
    <property type="entry name" value="EFh"/>
    <property type="match status" value="1"/>
</dbReference>
<dbReference type="FunFam" id="1.10.238.10:FF:000034">
    <property type="entry name" value="Calmodulin"/>
    <property type="match status" value="1"/>
</dbReference>
<dbReference type="FunFam" id="1.10.238.10:FF:000477">
    <property type="entry name" value="Myosin 1 light chain cam2"/>
    <property type="match status" value="1"/>
</dbReference>
<dbReference type="Gene3D" id="1.10.238.10">
    <property type="entry name" value="EF-hand"/>
    <property type="match status" value="2"/>
</dbReference>
<dbReference type="InterPro" id="IPR050230">
    <property type="entry name" value="CALM/Myosin/TropC-like"/>
</dbReference>
<dbReference type="InterPro" id="IPR011992">
    <property type="entry name" value="EF-hand-dom_pair"/>
</dbReference>
<dbReference type="InterPro" id="IPR018247">
    <property type="entry name" value="EF_Hand_1_Ca_BS"/>
</dbReference>
<dbReference type="InterPro" id="IPR002048">
    <property type="entry name" value="EF_hand_dom"/>
</dbReference>
<dbReference type="PANTHER" id="PTHR23048:SF0">
    <property type="entry name" value="CALMODULIN LIKE 3"/>
    <property type="match status" value="1"/>
</dbReference>
<dbReference type="PANTHER" id="PTHR23048">
    <property type="entry name" value="MYOSIN LIGHT CHAIN 1, 3"/>
    <property type="match status" value="1"/>
</dbReference>
<dbReference type="Pfam" id="PF13499">
    <property type="entry name" value="EF-hand_7"/>
    <property type="match status" value="2"/>
</dbReference>
<dbReference type="SMART" id="SM00054">
    <property type="entry name" value="EFh"/>
    <property type="match status" value="2"/>
</dbReference>
<dbReference type="SUPFAM" id="SSF47473">
    <property type="entry name" value="EF-hand"/>
    <property type="match status" value="1"/>
</dbReference>
<dbReference type="PROSITE" id="PS00018">
    <property type="entry name" value="EF_HAND_1"/>
    <property type="match status" value="1"/>
</dbReference>
<dbReference type="PROSITE" id="PS50222">
    <property type="entry name" value="EF_HAND_2"/>
    <property type="match status" value="3"/>
</dbReference>
<protein>
    <recommendedName>
        <fullName>Myosin-ID light chain</fullName>
    </recommendedName>
    <alternativeName>
        <fullName>Calmodulin-like protein mlcD</fullName>
    </alternativeName>
    <alternativeName>
        <fullName>Myosin light chain mlcD</fullName>
        <shortName>MlcD</shortName>
    </alternativeName>
</protein>
<evidence type="ECO:0000250" key="1"/>
<evidence type="ECO:0000255" key="2">
    <source>
        <dbReference type="PROSITE-ProRule" id="PRU00448"/>
    </source>
</evidence>
<evidence type="ECO:0000269" key="3">
    <source>
    </source>
</evidence>
<evidence type="ECO:0000269" key="4">
    <source>
    </source>
</evidence>